<evidence type="ECO:0000255" key="1">
    <source>
        <dbReference type="HAMAP-Rule" id="MF_01637"/>
    </source>
</evidence>
<evidence type="ECO:0000305" key="2"/>
<feature type="chain" id="PRO_0000209489" description="Fe/S biogenesis protein NfuA">
    <location>
        <begin position="1"/>
        <end position="184"/>
    </location>
</feature>
<feature type="binding site" evidence="1">
    <location>
        <position position="142"/>
    </location>
    <ligand>
        <name>[4Fe-4S] cluster</name>
        <dbReference type="ChEBI" id="CHEBI:49883"/>
    </ligand>
</feature>
<feature type="binding site" evidence="1">
    <location>
        <position position="145"/>
    </location>
    <ligand>
        <name>[4Fe-4S] cluster</name>
        <dbReference type="ChEBI" id="CHEBI:49883"/>
    </ligand>
</feature>
<organism>
    <name type="scientific">Wigglesworthia glossinidia brevipalpis</name>
    <dbReference type="NCBI Taxonomy" id="36870"/>
    <lineage>
        <taxon>Bacteria</taxon>
        <taxon>Pseudomonadati</taxon>
        <taxon>Pseudomonadota</taxon>
        <taxon>Gammaproteobacteria</taxon>
        <taxon>Enterobacterales</taxon>
        <taxon>Erwiniaceae</taxon>
        <taxon>Wigglesworthia</taxon>
    </lineage>
</organism>
<protein>
    <recommendedName>
        <fullName evidence="1">Fe/S biogenesis protein NfuA</fullName>
    </recommendedName>
</protein>
<keyword id="KW-0004">4Fe-4S</keyword>
<keyword id="KW-0408">Iron</keyword>
<keyword id="KW-0411">Iron-sulfur</keyword>
<keyword id="KW-0479">Metal-binding</keyword>
<keyword id="KW-1185">Reference proteome</keyword>
<accession>Q8D2Q3</accession>
<comment type="function">
    <text evidence="1">Involved in iron-sulfur cluster biogenesis. Binds a 4Fe-4S cluster, can transfer this cluster to apoproteins, and thereby intervenes in the maturation of Fe/S proteins. Could also act as a scaffold/chaperone for damaged Fe/S proteins.</text>
</comment>
<comment type="cofactor">
    <cofactor evidence="1">
        <name>[4Fe-4S] cluster</name>
        <dbReference type="ChEBI" id="CHEBI:49883"/>
    </cofactor>
    <text evidence="1">Binds 1 [4Fe-4S] cluster per subunit. The cluster is presumably bound at the interface of two monomers.</text>
</comment>
<comment type="subunit">
    <text evidence="1">Homodimer.</text>
</comment>
<comment type="similarity">
    <text evidence="1">Belongs to the NfuA family.</text>
</comment>
<comment type="sequence caution" evidence="2">
    <conflict type="erroneous initiation">
        <sequence resource="EMBL-CDS" id="BAC24447"/>
    </conflict>
</comment>
<reference key="1">
    <citation type="journal article" date="2002" name="Nat. Genet.">
        <title>Genome sequence of the endocellular obligate symbiont of tsetse flies, Wigglesworthia glossinidia.</title>
        <authorList>
            <person name="Akman L."/>
            <person name="Yamashita A."/>
            <person name="Watanabe H."/>
            <person name="Oshima K."/>
            <person name="Shiba T."/>
            <person name="Hattori M."/>
            <person name="Aksoy S."/>
        </authorList>
    </citation>
    <scope>NUCLEOTIDE SEQUENCE [LARGE SCALE GENOMIC DNA]</scope>
</reference>
<gene>
    <name evidence="1" type="primary">nfuA</name>
    <name type="ordered locus">WIGBR3010</name>
</gene>
<proteinExistence type="inferred from homology"/>
<name>NFUA_WIGBR</name>
<dbReference type="EMBL" id="BA000021">
    <property type="protein sequence ID" value="BAC24447.1"/>
    <property type="status" value="ALT_INIT"/>
    <property type="molecule type" value="Genomic_DNA"/>
</dbReference>
<dbReference type="SMR" id="Q8D2Q3"/>
<dbReference type="STRING" id="36870.gene:10368794"/>
<dbReference type="KEGG" id="wbr:yhgI"/>
<dbReference type="eggNOG" id="COG0694">
    <property type="taxonomic scope" value="Bacteria"/>
</dbReference>
<dbReference type="HOGENOM" id="CLU_094569_0_0_6"/>
<dbReference type="Proteomes" id="UP000000562">
    <property type="component" value="Chromosome"/>
</dbReference>
<dbReference type="GO" id="GO:0051539">
    <property type="term" value="F:4 iron, 4 sulfur cluster binding"/>
    <property type="evidence" value="ECO:0007669"/>
    <property type="project" value="UniProtKB-UniRule"/>
</dbReference>
<dbReference type="GO" id="GO:0005506">
    <property type="term" value="F:iron ion binding"/>
    <property type="evidence" value="ECO:0007669"/>
    <property type="project" value="InterPro"/>
</dbReference>
<dbReference type="GO" id="GO:0016226">
    <property type="term" value="P:iron-sulfur cluster assembly"/>
    <property type="evidence" value="ECO:0007669"/>
    <property type="project" value="UniProtKB-UniRule"/>
</dbReference>
<dbReference type="GO" id="GO:0051604">
    <property type="term" value="P:protein maturation"/>
    <property type="evidence" value="ECO:0007669"/>
    <property type="project" value="UniProtKB-UniRule"/>
</dbReference>
<dbReference type="Gene3D" id="3.30.300.130">
    <property type="entry name" value="Fe-S cluster assembly (FSCA)"/>
    <property type="match status" value="1"/>
</dbReference>
<dbReference type="Gene3D" id="2.60.300.12">
    <property type="entry name" value="HesB-like domain"/>
    <property type="match status" value="1"/>
</dbReference>
<dbReference type="HAMAP" id="MF_01637">
    <property type="entry name" value="Fe_S_biogen_NfuA"/>
    <property type="match status" value="1"/>
</dbReference>
<dbReference type="InterPro" id="IPR017726">
    <property type="entry name" value="Fe/S_biogenesis_protein_NfuA"/>
</dbReference>
<dbReference type="InterPro" id="IPR034904">
    <property type="entry name" value="FSCA_dom_sf"/>
</dbReference>
<dbReference type="InterPro" id="IPR035903">
    <property type="entry name" value="HesB-like_dom_sf"/>
</dbReference>
<dbReference type="InterPro" id="IPR001075">
    <property type="entry name" value="NIF_FeS_clus_asmbl_NifU_C"/>
</dbReference>
<dbReference type="Pfam" id="PF01106">
    <property type="entry name" value="NifU"/>
    <property type="match status" value="1"/>
</dbReference>
<dbReference type="SUPFAM" id="SSF117916">
    <property type="entry name" value="Fe-S cluster assembly (FSCA) domain-like"/>
    <property type="match status" value="1"/>
</dbReference>
<dbReference type="SUPFAM" id="SSF89360">
    <property type="entry name" value="HesB-like domain"/>
    <property type="match status" value="1"/>
</dbReference>
<sequence length="184" mass="21713">MIIISKSAKHYLSKLLSKKKKGTNIKLSIENKDKENLTCQIKYFDKKEENFNYTKFNFIDFKVYVKKNIFIYIKKIKIDIESKSLKDEIIIKIFKKRENLKNRISNFIKYKINSKLEYHGGFVELIDIKENMFVILKFFGGCNGCSMAKVTLKEGIEKEIKKNFPNIKGVIDITDHIHSESSFY</sequence>